<comment type="function">
    <text evidence="1">Specifically dimethylates two adjacent adenosines (A1518 and A1519) in the loop of a conserved hairpin near the 3'-end of 16S rRNA in the 30S particle. May play a critical role in biogenesis of 30S subunits.</text>
</comment>
<comment type="catalytic activity">
    <reaction evidence="1">
        <text>adenosine(1518)/adenosine(1519) in 16S rRNA + 4 S-adenosyl-L-methionine = N(6)-dimethyladenosine(1518)/N(6)-dimethyladenosine(1519) in 16S rRNA + 4 S-adenosyl-L-homocysteine + 4 H(+)</text>
        <dbReference type="Rhea" id="RHEA:19609"/>
        <dbReference type="Rhea" id="RHEA-COMP:10232"/>
        <dbReference type="Rhea" id="RHEA-COMP:10233"/>
        <dbReference type="ChEBI" id="CHEBI:15378"/>
        <dbReference type="ChEBI" id="CHEBI:57856"/>
        <dbReference type="ChEBI" id="CHEBI:59789"/>
        <dbReference type="ChEBI" id="CHEBI:74411"/>
        <dbReference type="ChEBI" id="CHEBI:74493"/>
        <dbReference type="EC" id="2.1.1.182"/>
    </reaction>
</comment>
<comment type="subcellular location">
    <subcellularLocation>
        <location evidence="1">Cytoplasm</location>
    </subcellularLocation>
</comment>
<comment type="similarity">
    <text evidence="1">Belongs to the class I-like SAM-binding methyltransferase superfamily. rRNA adenine N(6)-methyltransferase family. RsmA subfamily.</text>
</comment>
<accession>Q1GI39</accession>
<gene>
    <name evidence="1" type="primary">rsmA</name>
    <name evidence="1" type="synonym">ksgA</name>
    <name type="ordered locus">TM1040_0944</name>
</gene>
<protein>
    <recommendedName>
        <fullName evidence="1">Ribosomal RNA small subunit methyltransferase A</fullName>
        <ecNumber evidence="1">2.1.1.182</ecNumber>
    </recommendedName>
    <alternativeName>
        <fullName evidence="1">16S rRNA (adenine(1518)-N(6)/adenine(1519)-N(6))-dimethyltransferase</fullName>
    </alternativeName>
    <alternativeName>
        <fullName evidence="1">16S rRNA dimethyladenosine transferase</fullName>
    </alternativeName>
    <alternativeName>
        <fullName evidence="1">16S rRNA dimethylase</fullName>
    </alternativeName>
    <alternativeName>
        <fullName evidence="1">S-adenosylmethionine-6-N', N'-adenosyl(rRNA) dimethyltransferase</fullName>
    </alternativeName>
</protein>
<sequence length="280" mass="30279">MSAIDNLPPLREVIATHQLSARKSLGQNFLLDLNLTAKIARQAGDLTGCDVLEIGPGPGGLTRGLLSEGARKILAIEKDQRCLPALEDIAAAYPGRLEVINGDALEIDPLAHLTPPIRVAANLPYNVGTELLVRWLTPKEWPPFWQSLTLMFQREVAERIVAQPGSKAYGRLAILAQWRAEARIALSLPPGAFTPPPKVSSAVVHLTALPEPRYPADAAILSRVVAAAFNQRRKMLRASLKGVSPQIEDHLNAAGIPPTERAEQVSVEDFCALARSLEKG</sequence>
<proteinExistence type="inferred from homology"/>
<evidence type="ECO:0000255" key="1">
    <source>
        <dbReference type="HAMAP-Rule" id="MF_00607"/>
    </source>
</evidence>
<name>RSMA_RUEST</name>
<dbReference type="EC" id="2.1.1.182" evidence="1"/>
<dbReference type="EMBL" id="CP000377">
    <property type="protein sequence ID" value="ABF63677.1"/>
    <property type="molecule type" value="Genomic_DNA"/>
</dbReference>
<dbReference type="RefSeq" id="WP_011538287.1">
    <property type="nucleotide sequence ID" value="NC_008044.1"/>
</dbReference>
<dbReference type="SMR" id="Q1GI39"/>
<dbReference type="STRING" id="292414.TM1040_0944"/>
<dbReference type="KEGG" id="sit:TM1040_0944"/>
<dbReference type="eggNOG" id="COG0030">
    <property type="taxonomic scope" value="Bacteria"/>
</dbReference>
<dbReference type="HOGENOM" id="CLU_041220_0_1_5"/>
<dbReference type="OrthoDB" id="9814755at2"/>
<dbReference type="Proteomes" id="UP000000636">
    <property type="component" value="Chromosome"/>
</dbReference>
<dbReference type="GO" id="GO:0005829">
    <property type="term" value="C:cytosol"/>
    <property type="evidence" value="ECO:0007669"/>
    <property type="project" value="TreeGrafter"/>
</dbReference>
<dbReference type="GO" id="GO:0052908">
    <property type="term" value="F:16S rRNA (adenine(1518)-N(6)/adenine(1519)-N(6))-dimethyltransferase activity"/>
    <property type="evidence" value="ECO:0007669"/>
    <property type="project" value="UniProtKB-EC"/>
</dbReference>
<dbReference type="GO" id="GO:0003723">
    <property type="term" value="F:RNA binding"/>
    <property type="evidence" value="ECO:0007669"/>
    <property type="project" value="UniProtKB-KW"/>
</dbReference>
<dbReference type="CDD" id="cd02440">
    <property type="entry name" value="AdoMet_MTases"/>
    <property type="match status" value="1"/>
</dbReference>
<dbReference type="FunFam" id="1.10.8.100:FF:000001">
    <property type="entry name" value="Ribosomal RNA small subunit methyltransferase A"/>
    <property type="match status" value="1"/>
</dbReference>
<dbReference type="Gene3D" id="1.10.8.100">
    <property type="entry name" value="Ribosomal RNA adenine dimethylase-like, domain 2"/>
    <property type="match status" value="1"/>
</dbReference>
<dbReference type="Gene3D" id="3.40.50.150">
    <property type="entry name" value="Vaccinia Virus protein VP39"/>
    <property type="match status" value="1"/>
</dbReference>
<dbReference type="HAMAP" id="MF_00607">
    <property type="entry name" value="16SrRNA_methyltr_A"/>
    <property type="match status" value="1"/>
</dbReference>
<dbReference type="InterPro" id="IPR001737">
    <property type="entry name" value="KsgA/Erm"/>
</dbReference>
<dbReference type="InterPro" id="IPR023165">
    <property type="entry name" value="rRNA_Ade_diMease-like_C"/>
</dbReference>
<dbReference type="InterPro" id="IPR020596">
    <property type="entry name" value="rRNA_Ade_Mease_Trfase_CS"/>
</dbReference>
<dbReference type="InterPro" id="IPR020598">
    <property type="entry name" value="rRNA_Ade_methylase_Trfase_N"/>
</dbReference>
<dbReference type="InterPro" id="IPR011530">
    <property type="entry name" value="rRNA_adenine_dimethylase"/>
</dbReference>
<dbReference type="InterPro" id="IPR029063">
    <property type="entry name" value="SAM-dependent_MTases_sf"/>
</dbReference>
<dbReference type="NCBIfam" id="TIGR00755">
    <property type="entry name" value="ksgA"/>
    <property type="match status" value="1"/>
</dbReference>
<dbReference type="PANTHER" id="PTHR11727">
    <property type="entry name" value="DIMETHYLADENOSINE TRANSFERASE"/>
    <property type="match status" value="1"/>
</dbReference>
<dbReference type="PANTHER" id="PTHR11727:SF7">
    <property type="entry name" value="DIMETHYLADENOSINE TRANSFERASE-RELATED"/>
    <property type="match status" value="1"/>
</dbReference>
<dbReference type="Pfam" id="PF00398">
    <property type="entry name" value="RrnaAD"/>
    <property type="match status" value="1"/>
</dbReference>
<dbReference type="SMART" id="SM00650">
    <property type="entry name" value="rADc"/>
    <property type="match status" value="1"/>
</dbReference>
<dbReference type="SUPFAM" id="SSF53335">
    <property type="entry name" value="S-adenosyl-L-methionine-dependent methyltransferases"/>
    <property type="match status" value="1"/>
</dbReference>
<dbReference type="PROSITE" id="PS01131">
    <property type="entry name" value="RRNA_A_DIMETH"/>
    <property type="match status" value="1"/>
</dbReference>
<dbReference type="PROSITE" id="PS51689">
    <property type="entry name" value="SAM_RNA_A_N6_MT"/>
    <property type="match status" value="1"/>
</dbReference>
<keyword id="KW-0963">Cytoplasm</keyword>
<keyword id="KW-0489">Methyltransferase</keyword>
<keyword id="KW-1185">Reference proteome</keyword>
<keyword id="KW-0694">RNA-binding</keyword>
<keyword id="KW-0698">rRNA processing</keyword>
<keyword id="KW-0949">S-adenosyl-L-methionine</keyword>
<keyword id="KW-0808">Transferase</keyword>
<reference key="1">
    <citation type="submission" date="2006-05" db="EMBL/GenBank/DDBJ databases">
        <title>Complete sequence of chromosome of Silicibacter sp. TM1040.</title>
        <authorList>
            <consortium name="US DOE Joint Genome Institute"/>
            <person name="Copeland A."/>
            <person name="Lucas S."/>
            <person name="Lapidus A."/>
            <person name="Barry K."/>
            <person name="Detter J.C."/>
            <person name="Glavina del Rio T."/>
            <person name="Hammon N."/>
            <person name="Israni S."/>
            <person name="Dalin E."/>
            <person name="Tice H."/>
            <person name="Pitluck S."/>
            <person name="Brettin T."/>
            <person name="Bruce D."/>
            <person name="Han C."/>
            <person name="Tapia R."/>
            <person name="Goodwin L."/>
            <person name="Thompson L.S."/>
            <person name="Gilna P."/>
            <person name="Schmutz J."/>
            <person name="Larimer F."/>
            <person name="Land M."/>
            <person name="Hauser L."/>
            <person name="Kyrpides N."/>
            <person name="Kim E."/>
            <person name="Belas R."/>
            <person name="Moran M.A."/>
            <person name="Buchan A."/>
            <person name="Gonzalez J.M."/>
            <person name="Schell M.A."/>
            <person name="Sun F."/>
            <person name="Richardson P."/>
        </authorList>
    </citation>
    <scope>NUCLEOTIDE SEQUENCE [LARGE SCALE GENOMIC DNA]</scope>
    <source>
        <strain>TM1040</strain>
    </source>
</reference>
<organism>
    <name type="scientific">Ruegeria sp. (strain TM1040)</name>
    <name type="common">Silicibacter sp.</name>
    <dbReference type="NCBI Taxonomy" id="292414"/>
    <lineage>
        <taxon>Bacteria</taxon>
        <taxon>Pseudomonadati</taxon>
        <taxon>Pseudomonadota</taxon>
        <taxon>Alphaproteobacteria</taxon>
        <taxon>Rhodobacterales</taxon>
        <taxon>Roseobacteraceae</taxon>
        <taxon>Ruegeria</taxon>
    </lineage>
</organism>
<feature type="chain" id="PRO_0000257348" description="Ribosomal RNA small subunit methyltransferase A">
    <location>
        <begin position="1"/>
        <end position="280"/>
    </location>
</feature>
<feature type="binding site" evidence="1">
    <location>
        <position position="28"/>
    </location>
    <ligand>
        <name>S-adenosyl-L-methionine</name>
        <dbReference type="ChEBI" id="CHEBI:59789"/>
    </ligand>
</feature>
<feature type="binding site" evidence="1">
    <location>
        <position position="30"/>
    </location>
    <ligand>
        <name>S-adenosyl-L-methionine</name>
        <dbReference type="ChEBI" id="CHEBI:59789"/>
    </ligand>
</feature>
<feature type="binding site" evidence="1">
    <location>
        <position position="55"/>
    </location>
    <ligand>
        <name>S-adenosyl-L-methionine</name>
        <dbReference type="ChEBI" id="CHEBI:59789"/>
    </ligand>
</feature>
<feature type="binding site" evidence="1">
    <location>
        <position position="77"/>
    </location>
    <ligand>
        <name>S-adenosyl-L-methionine</name>
        <dbReference type="ChEBI" id="CHEBI:59789"/>
    </ligand>
</feature>
<feature type="binding site" evidence="1">
    <location>
        <position position="103"/>
    </location>
    <ligand>
        <name>S-adenosyl-L-methionine</name>
        <dbReference type="ChEBI" id="CHEBI:59789"/>
    </ligand>
</feature>
<feature type="binding site" evidence="1">
    <location>
        <position position="122"/>
    </location>
    <ligand>
        <name>S-adenosyl-L-methionine</name>
        <dbReference type="ChEBI" id="CHEBI:59789"/>
    </ligand>
</feature>